<organism>
    <name type="scientific">Xylella fastidiosa (strain Temecula1 / ATCC 700964)</name>
    <dbReference type="NCBI Taxonomy" id="183190"/>
    <lineage>
        <taxon>Bacteria</taxon>
        <taxon>Pseudomonadati</taxon>
        <taxon>Pseudomonadota</taxon>
        <taxon>Gammaproteobacteria</taxon>
        <taxon>Lysobacterales</taxon>
        <taxon>Lysobacteraceae</taxon>
        <taxon>Xylella</taxon>
    </lineage>
</organism>
<dbReference type="EMBL" id="AE009442">
    <property type="protein sequence ID" value="AAO29743.1"/>
    <property type="molecule type" value="Genomic_DNA"/>
</dbReference>
<dbReference type="RefSeq" id="WP_004090404.1">
    <property type="nucleotide sequence ID" value="NC_004556.1"/>
</dbReference>
<dbReference type="SMR" id="Q87AB4"/>
<dbReference type="GeneID" id="93905773"/>
<dbReference type="KEGG" id="xft:PD_1913"/>
<dbReference type="HOGENOM" id="CLU_123265_0_1_6"/>
<dbReference type="Proteomes" id="UP000002516">
    <property type="component" value="Chromosome"/>
</dbReference>
<dbReference type="GO" id="GO:1990904">
    <property type="term" value="C:ribonucleoprotein complex"/>
    <property type="evidence" value="ECO:0007669"/>
    <property type="project" value="UniProtKB-KW"/>
</dbReference>
<dbReference type="GO" id="GO:0005840">
    <property type="term" value="C:ribosome"/>
    <property type="evidence" value="ECO:0007669"/>
    <property type="project" value="UniProtKB-KW"/>
</dbReference>
<dbReference type="GO" id="GO:0019843">
    <property type="term" value="F:rRNA binding"/>
    <property type="evidence" value="ECO:0007669"/>
    <property type="project" value="UniProtKB-UniRule"/>
</dbReference>
<dbReference type="GO" id="GO:0003735">
    <property type="term" value="F:structural constituent of ribosome"/>
    <property type="evidence" value="ECO:0007669"/>
    <property type="project" value="InterPro"/>
</dbReference>
<dbReference type="GO" id="GO:0000027">
    <property type="term" value="P:ribosomal large subunit assembly"/>
    <property type="evidence" value="ECO:0007669"/>
    <property type="project" value="UniProtKB-UniRule"/>
</dbReference>
<dbReference type="GO" id="GO:0006412">
    <property type="term" value="P:translation"/>
    <property type="evidence" value="ECO:0007669"/>
    <property type="project" value="InterPro"/>
</dbReference>
<dbReference type="CDD" id="cd07026">
    <property type="entry name" value="Ribosomal_L20"/>
    <property type="match status" value="1"/>
</dbReference>
<dbReference type="FunFam" id="1.10.1900.20:FF:000001">
    <property type="entry name" value="50S ribosomal protein L20"/>
    <property type="match status" value="1"/>
</dbReference>
<dbReference type="Gene3D" id="6.10.160.10">
    <property type="match status" value="1"/>
</dbReference>
<dbReference type="Gene3D" id="1.10.1900.20">
    <property type="entry name" value="Ribosomal protein L20"/>
    <property type="match status" value="1"/>
</dbReference>
<dbReference type="HAMAP" id="MF_00382">
    <property type="entry name" value="Ribosomal_bL20"/>
    <property type="match status" value="1"/>
</dbReference>
<dbReference type="InterPro" id="IPR005813">
    <property type="entry name" value="Ribosomal_bL20"/>
</dbReference>
<dbReference type="InterPro" id="IPR049946">
    <property type="entry name" value="RIBOSOMAL_L20_CS"/>
</dbReference>
<dbReference type="InterPro" id="IPR035566">
    <property type="entry name" value="Ribosomal_protein_bL20_C"/>
</dbReference>
<dbReference type="NCBIfam" id="TIGR01032">
    <property type="entry name" value="rplT_bact"/>
    <property type="match status" value="1"/>
</dbReference>
<dbReference type="PANTHER" id="PTHR10986">
    <property type="entry name" value="39S RIBOSOMAL PROTEIN L20"/>
    <property type="match status" value="1"/>
</dbReference>
<dbReference type="Pfam" id="PF00453">
    <property type="entry name" value="Ribosomal_L20"/>
    <property type="match status" value="1"/>
</dbReference>
<dbReference type="PRINTS" id="PR00062">
    <property type="entry name" value="RIBOSOMALL20"/>
</dbReference>
<dbReference type="SUPFAM" id="SSF74731">
    <property type="entry name" value="Ribosomal protein L20"/>
    <property type="match status" value="1"/>
</dbReference>
<dbReference type="PROSITE" id="PS00937">
    <property type="entry name" value="RIBOSOMAL_L20"/>
    <property type="match status" value="1"/>
</dbReference>
<keyword id="KW-1185">Reference proteome</keyword>
<keyword id="KW-0687">Ribonucleoprotein</keyword>
<keyword id="KW-0689">Ribosomal protein</keyword>
<keyword id="KW-0694">RNA-binding</keyword>
<keyword id="KW-0699">rRNA-binding</keyword>
<protein>
    <recommendedName>
        <fullName evidence="1">Large ribosomal subunit protein bL20</fullName>
    </recommendedName>
    <alternativeName>
        <fullName evidence="2">50S ribosomal protein L20</fullName>
    </alternativeName>
</protein>
<name>RL20_XYLFT</name>
<proteinExistence type="inferred from homology"/>
<gene>
    <name evidence="1" type="primary">rplT</name>
    <name type="ordered locus">PD_1913</name>
</gene>
<feature type="chain" id="PRO_0000177270" description="Large ribosomal subunit protein bL20">
    <location>
        <begin position="1"/>
        <end position="119"/>
    </location>
</feature>
<comment type="function">
    <text evidence="1">Binds directly to 23S ribosomal RNA and is necessary for the in vitro assembly process of the 50S ribosomal subunit. It is not involved in the protein synthesizing functions of that subunit.</text>
</comment>
<comment type="similarity">
    <text evidence="1">Belongs to the bacterial ribosomal protein bL20 family.</text>
</comment>
<reference key="1">
    <citation type="journal article" date="2003" name="J. Bacteriol.">
        <title>Comparative analyses of the complete genome sequences of Pierce's disease and citrus variegated chlorosis strains of Xylella fastidiosa.</title>
        <authorList>
            <person name="Van Sluys M.A."/>
            <person name="de Oliveira M.C."/>
            <person name="Monteiro-Vitorello C.B."/>
            <person name="Miyaki C.Y."/>
            <person name="Furlan L.R."/>
            <person name="Camargo L.E.A."/>
            <person name="da Silva A.C.R."/>
            <person name="Moon D.H."/>
            <person name="Takita M.A."/>
            <person name="Lemos E.G.M."/>
            <person name="Machado M.A."/>
            <person name="Ferro M.I.T."/>
            <person name="da Silva F.R."/>
            <person name="Goldman M.H.S."/>
            <person name="Goldman G.H."/>
            <person name="Lemos M.V.F."/>
            <person name="El-Dorry H."/>
            <person name="Tsai S.M."/>
            <person name="Carrer H."/>
            <person name="Carraro D.M."/>
            <person name="de Oliveira R.C."/>
            <person name="Nunes L.R."/>
            <person name="Siqueira W.J."/>
            <person name="Coutinho L.L."/>
            <person name="Kimura E.T."/>
            <person name="Ferro E.S."/>
            <person name="Harakava R."/>
            <person name="Kuramae E.E."/>
            <person name="Marino C.L."/>
            <person name="Giglioti E."/>
            <person name="Abreu I.L."/>
            <person name="Alves L.M.C."/>
            <person name="do Amaral A.M."/>
            <person name="Baia G.S."/>
            <person name="Blanco S.R."/>
            <person name="Brito M.S."/>
            <person name="Cannavan F.S."/>
            <person name="Celestino A.V."/>
            <person name="da Cunha A.F."/>
            <person name="Fenille R.C."/>
            <person name="Ferro J.A."/>
            <person name="Formighieri E.F."/>
            <person name="Kishi L.T."/>
            <person name="Leoni S.G."/>
            <person name="Oliveira A.R."/>
            <person name="Rosa V.E. Jr."/>
            <person name="Sassaki F.T."/>
            <person name="Sena J.A.D."/>
            <person name="de Souza A.A."/>
            <person name="Truffi D."/>
            <person name="Tsukumo F."/>
            <person name="Yanai G.M."/>
            <person name="Zaros L.G."/>
            <person name="Civerolo E.L."/>
            <person name="Simpson A.J.G."/>
            <person name="Almeida N.F. Jr."/>
            <person name="Setubal J.C."/>
            <person name="Kitajima J.P."/>
        </authorList>
    </citation>
    <scope>NUCLEOTIDE SEQUENCE [LARGE SCALE GENOMIC DNA]</scope>
    <source>
        <strain>Temecula1 / ATCC 700964</strain>
    </source>
</reference>
<accession>Q87AB4</accession>
<evidence type="ECO:0000255" key="1">
    <source>
        <dbReference type="HAMAP-Rule" id="MF_00382"/>
    </source>
</evidence>
<evidence type="ECO:0000305" key="2"/>
<sequence>MARVKRGVQARRRHKKILSLAKGYYNARRKVFRVAKQAVIKAQQYAYIGRKQKKRNFRSLWIVRINAAARMNGLSYSRFMNGILKCGITLDRKMLADIAVHDPAGFTALAEKAKTMLAA</sequence>